<feature type="chain" id="PRO_1000118187" description="Ribosomal RNA small subunit methyltransferase G">
    <location>
        <begin position="1"/>
        <end position="207"/>
    </location>
</feature>
<feature type="binding site" evidence="1">
    <location>
        <position position="73"/>
    </location>
    <ligand>
        <name>S-adenosyl-L-methionine</name>
        <dbReference type="ChEBI" id="CHEBI:59789"/>
    </ligand>
</feature>
<feature type="binding site" evidence="1">
    <location>
        <position position="78"/>
    </location>
    <ligand>
        <name>S-adenosyl-L-methionine</name>
        <dbReference type="ChEBI" id="CHEBI:59789"/>
    </ligand>
</feature>
<feature type="binding site" evidence="1">
    <location>
        <begin position="124"/>
        <end position="125"/>
    </location>
    <ligand>
        <name>S-adenosyl-L-methionine</name>
        <dbReference type="ChEBI" id="CHEBI:59789"/>
    </ligand>
</feature>
<feature type="binding site" evidence="1">
    <location>
        <position position="139"/>
    </location>
    <ligand>
        <name>S-adenosyl-L-methionine</name>
        <dbReference type="ChEBI" id="CHEBI:59789"/>
    </ligand>
</feature>
<accession>B7L890</accession>
<name>RSMG_ECO55</name>
<gene>
    <name evidence="1" type="primary">rsmG</name>
    <name type="ordered locus">EC55989_4215</name>
</gene>
<dbReference type="EC" id="2.1.1.170" evidence="1"/>
<dbReference type="EMBL" id="CU928145">
    <property type="protein sequence ID" value="CAV00831.1"/>
    <property type="molecule type" value="Genomic_DNA"/>
</dbReference>
<dbReference type="RefSeq" id="WP_000932839.1">
    <property type="nucleotide sequence ID" value="NZ_CP028304.1"/>
</dbReference>
<dbReference type="SMR" id="B7L890"/>
<dbReference type="GeneID" id="93778227"/>
<dbReference type="KEGG" id="eck:EC55989_4215"/>
<dbReference type="HOGENOM" id="CLU_065341_2_2_6"/>
<dbReference type="Proteomes" id="UP000000746">
    <property type="component" value="Chromosome"/>
</dbReference>
<dbReference type="GO" id="GO:0005829">
    <property type="term" value="C:cytosol"/>
    <property type="evidence" value="ECO:0007669"/>
    <property type="project" value="TreeGrafter"/>
</dbReference>
<dbReference type="GO" id="GO:0070043">
    <property type="term" value="F:rRNA (guanine-N7-)-methyltransferase activity"/>
    <property type="evidence" value="ECO:0007669"/>
    <property type="project" value="UniProtKB-UniRule"/>
</dbReference>
<dbReference type="CDD" id="cd02440">
    <property type="entry name" value="AdoMet_MTases"/>
    <property type="match status" value="1"/>
</dbReference>
<dbReference type="FunFam" id="3.40.50.150:FF:000032">
    <property type="entry name" value="Ribosomal RNA small subunit methyltransferase G"/>
    <property type="match status" value="1"/>
</dbReference>
<dbReference type="Gene3D" id="3.40.50.150">
    <property type="entry name" value="Vaccinia Virus protein VP39"/>
    <property type="match status" value="1"/>
</dbReference>
<dbReference type="HAMAP" id="MF_00074">
    <property type="entry name" value="16SrRNA_methyltr_G"/>
    <property type="match status" value="1"/>
</dbReference>
<dbReference type="InterPro" id="IPR003682">
    <property type="entry name" value="rRNA_ssu_MeTfrase_G"/>
</dbReference>
<dbReference type="InterPro" id="IPR029063">
    <property type="entry name" value="SAM-dependent_MTases_sf"/>
</dbReference>
<dbReference type="NCBIfam" id="TIGR00138">
    <property type="entry name" value="rsmG_gidB"/>
    <property type="match status" value="1"/>
</dbReference>
<dbReference type="PANTHER" id="PTHR31760">
    <property type="entry name" value="S-ADENOSYL-L-METHIONINE-DEPENDENT METHYLTRANSFERASES SUPERFAMILY PROTEIN"/>
    <property type="match status" value="1"/>
</dbReference>
<dbReference type="PANTHER" id="PTHR31760:SF0">
    <property type="entry name" value="S-ADENOSYL-L-METHIONINE-DEPENDENT METHYLTRANSFERASES SUPERFAMILY PROTEIN"/>
    <property type="match status" value="1"/>
</dbReference>
<dbReference type="Pfam" id="PF02527">
    <property type="entry name" value="GidB"/>
    <property type="match status" value="1"/>
</dbReference>
<dbReference type="PIRSF" id="PIRSF003078">
    <property type="entry name" value="GidB"/>
    <property type="match status" value="1"/>
</dbReference>
<dbReference type="SUPFAM" id="SSF53335">
    <property type="entry name" value="S-adenosyl-L-methionine-dependent methyltransferases"/>
    <property type="match status" value="1"/>
</dbReference>
<reference key="1">
    <citation type="journal article" date="2009" name="PLoS Genet.">
        <title>Organised genome dynamics in the Escherichia coli species results in highly diverse adaptive paths.</title>
        <authorList>
            <person name="Touchon M."/>
            <person name="Hoede C."/>
            <person name="Tenaillon O."/>
            <person name="Barbe V."/>
            <person name="Baeriswyl S."/>
            <person name="Bidet P."/>
            <person name="Bingen E."/>
            <person name="Bonacorsi S."/>
            <person name="Bouchier C."/>
            <person name="Bouvet O."/>
            <person name="Calteau A."/>
            <person name="Chiapello H."/>
            <person name="Clermont O."/>
            <person name="Cruveiller S."/>
            <person name="Danchin A."/>
            <person name="Diard M."/>
            <person name="Dossat C."/>
            <person name="Karoui M.E."/>
            <person name="Frapy E."/>
            <person name="Garry L."/>
            <person name="Ghigo J.M."/>
            <person name="Gilles A.M."/>
            <person name="Johnson J."/>
            <person name="Le Bouguenec C."/>
            <person name="Lescat M."/>
            <person name="Mangenot S."/>
            <person name="Martinez-Jehanne V."/>
            <person name="Matic I."/>
            <person name="Nassif X."/>
            <person name="Oztas S."/>
            <person name="Petit M.A."/>
            <person name="Pichon C."/>
            <person name="Rouy Z."/>
            <person name="Ruf C.S."/>
            <person name="Schneider D."/>
            <person name="Tourret J."/>
            <person name="Vacherie B."/>
            <person name="Vallenet D."/>
            <person name="Medigue C."/>
            <person name="Rocha E.P.C."/>
            <person name="Denamur E."/>
        </authorList>
    </citation>
    <scope>NUCLEOTIDE SEQUENCE [LARGE SCALE GENOMIC DNA]</scope>
    <source>
        <strain>55989 / EAEC</strain>
    </source>
</reference>
<keyword id="KW-0963">Cytoplasm</keyword>
<keyword id="KW-0489">Methyltransferase</keyword>
<keyword id="KW-1185">Reference proteome</keyword>
<keyword id="KW-0698">rRNA processing</keyword>
<keyword id="KW-0949">S-adenosyl-L-methionine</keyword>
<keyword id="KW-0808">Transferase</keyword>
<evidence type="ECO:0000255" key="1">
    <source>
        <dbReference type="HAMAP-Rule" id="MF_00074"/>
    </source>
</evidence>
<sequence length="207" mass="23431">MLNKLSLLLKDAGISLTDHQKNQLIAYVNMLHKWNKAYNLTSVRDPNEMLVRHILDSIVVAPYLQGERFIDVGTGPGLPGIPLSIVRPEAHFTLLDSLGKRVRFLRQVQHELKLENIEPVQSRVEEFPSEPPFDGVISRAFASLNDMVSWCHHLPGEQGRFYALKGQMPEDEIALLPEEYQVESVVKLQVPALDGERHLVVIKANKI</sequence>
<proteinExistence type="inferred from homology"/>
<comment type="function">
    <text evidence="1">Specifically methylates the N7 position of guanine in position 527 of 16S rRNA.</text>
</comment>
<comment type="catalytic activity">
    <reaction evidence="1">
        <text>guanosine(527) in 16S rRNA + S-adenosyl-L-methionine = N(7)-methylguanosine(527) in 16S rRNA + S-adenosyl-L-homocysteine</text>
        <dbReference type="Rhea" id="RHEA:42732"/>
        <dbReference type="Rhea" id="RHEA-COMP:10209"/>
        <dbReference type="Rhea" id="RHEA-COMP:10210"/>
        <dbReference type="ChEBI" id="CHEBI:57856"/>
        <dbReference type="ChEBI" id="CHEBI:59789"/>
        <dbReference type="ChEBI" id="CHEBI:74269"/>
        <dbReference type="ChEBI" id="CHEBI:74480"/>
        <dbReference type="EC" id="2.1.1.170"/>
    </reaction>
</comment>
<comment type="subcellular location">
    <subcellularLocation>
        <location evidence="1">Cytoplasm</location>
    </subcellularLocation>
</comment>
<comment type="similarity">
    <text evidence="1">Belongs to the methyltransferase superfamily. RNA methyltransferase RsmG family.</text>
</comment>
<organism>
    <name type="scientific">Escherichia coli (strain 55989 / EAEC)</name>
    <dbReference type="NCBI Taxonomy" id="585055"/>
    <lineage>
        <taxon>Bacteria</taxon>
        <taxon>Pseudomonadati</taxon>
        <taxon>Pseudomonadota</taxon>
        <taxon>Gammaproteobacteria</taxon>
        <taxon>Enterobacterales</taxon>
        <taxon>Enterobacteriaceae</taxon>
        <taxon>Escherichia</taxon>
    </lineage>
</organism>
<protein>
    <recommendedName>
        <fullName evidence="1">Ribosomal RNA small subunit methyltransferase G</fullName>
        <ecNumber evidence="1">2.1.1.170</ecNumber>
    </recommendedName>
    <alternativeName>
        <fullName evidence="1">16S rRNA 7-methylguanosine methyltransferase</fullName>
        <shortName evidence="1">16S rRNA m7G methyltransferase</shortName>
    </alternativeName>
</protein>